<comment type="function">
    <text evidence="1">Accepts ubiquitin from the E1 complex and catalyzes its covalent attachment to other proteins. In vitro catalyzes 'Lys-48'-linked polyubiquitination. Mediates the selective degradation of short-lived and abnormal proteins. Functions in the E6/E6-AP-induced ubiquitination of p53/TP53. Mediates ubiquitination of PEX5 and SQSTM1 and autoubiquitination of STUB1 and TRAF6. Involved in the signal-induced conjugation and subsequent degradation of NFKBIA, FBXW2-mediated GCM1 ubiquitination and degradation, MDM2-dependent degradation of p53/TP53 and the activation of MAVS in the mitochondria by RIGI in response to viral infection. Essential for viral activation of IRF3.</text>
</comment>
<comment type="catalytic activity">
    <reaction evidence="1 2 3">
        <text>S-ubiquitinyl-[E1 ubiquitin-activating enzyme]-L-cysteine + [E2 ubiquitin-conjugating enzyme]-L-cysteine = [E1 ubiquitin-activating enzyme]-L-cysteine + S-ubiquitinyl-[E2 ubiquitin-conjugating enzyme]-L-cysteine.</text>
        <dbReference type="EC" id="2.3.2.23"/>
    </reaction>
</comment>
<comment type="catalytic activity">
    <reaction evidence="1">
        <text>S-ubiquitinyl-[E1 ubiquitin-activating enzyme]-L-cysteine + [acceptor protein]-L-lysine = [E1 ubiquitin-activating enzyme]-L-cysteine + N(6)-monoubiquitinyl-[acceptor protein]-L-lysine.</text>
        <dbReference type="EC" id="2.3.2.24"/>
    </reaction>
</comment>
<comment type="pathway">
    <text evidence="2">Protein modification; protein ubiquitination.</text>
</comment>
<comment type="subunit">
    <text evidence="1 4 5 6">Interacts with SCF (SKP1-CUL1-F-box protein) E3 ubiquitin ligase complex. Interacts with CNOT4 (via RING domain). Interacts with E3 ubiquitin-protein ligases CBLC, PJA1 and PJA2. Interacts with PDZRN3. Interacts with PPP1R11 (PubMed:27805901). Interacts with E3 ubiquitin-protein ligase PHF7; the interaction inhibits cleavage of PHF7 and promotes association of the complex with the nucleosome core particle (By similarity).</text>
</comment>
<comment type="similarity">
    <text evidence="2">Belongs to the ubiquitin-conjugating enzyme family.</text>
</comment>
<sequence length="147" mass="16735">MALKRIHKELNDLARDPPAQCSAGPVGDDMFHWQATIMGPNDSPYQGGVFFLTIHFPTDYPFKPPKVAFTTRIYHPNINSNGSICLDILRSQWSPALTISKVLLSICSLLCDPNPDDPLVPEIARIYKTDREKYNRIAREWTQKYAM</sequence>
<name>UB2D2_MOUSE</name>
<gene>
    <name type="primary">Ube2d2</name>
    <name type="synonym">Ubc4</name>
    <name type="synonym">Ubch4</name>
    <name type="synonym">Ubch5b</name>
    <name type="synonym">Ube2d2a</name>
</gene>
<protein>
    <recommendedName>
        <fullName>Ubiquitin-conjugating enzyme E2 D2</fullName>
        <ecNumber>2.3.2.23</ecNumber>
    </recommendedName>
    <alternativeName>
        <fullName>(E3-independent) E2 ubiquitin-conjugating enzyme D2</fullName>
        <ecNumber>2.3.2.24</ecNumber>
    </alternativeName>
    <alternativeName>
        <fullName>E2 ubiquitin-conjugating enzyme D2</fullName>
    </alternativeName>
    <alternativeName>
        <fullName>Ubiquitin carrier protein D2</fullName>
    </alternativeName>
    <alternativeName>
        <fullName>Ubiquitin-conjugating enzyme E2(17)KB 2</fullName>
    </alternativeName>
    <alternativeName>
        <fullName>Ubiquitin-conjugating enzyme E2-17 kDa 2</fullName>
    </alternativeName>
    <alternativeName>
        <fullName>Ubiquitin-protein ligase D2</fullName>
    </alternativeName>
</protein>
<feature type="chain" id="PRO_0000082463" description="Ubiquitin-conjugating enzyme E2 D2">
    <location>
        <begin position="1"/>
        <end position="147"/>
    </location>
</feature>
<feature type="domain" description="UBC core" evidence="2">
    <location>
        <begin position="1"/>
        <end position="147"/>
    </location>
</feature>
<feature type="active site" description="Glycyl thioester intermediate" evidence="2 3">
    <location>
        <position position="85"/>
    </location>
</feature>
<accession>P62838</accession>
<accession>P51669</accession>
<dbReference type="EC" id="2.3.2.23"/>
<dbReference type="EC" id="2.3.2.24"/>
<dbReference type="EMBL" id="U62483">
    <property type="protein sequence ID" value="AAB05772.1"/>
    <property type="molecule type" value="mRNA"/>
</dbReference>
<dbReference type="EMBL" id="BC003923">
    <property type="protein sequence ID" value="AAH03923.1"/>
    <property type="molecule type" value="mRNA"/>
</dbReference>
<dbReference type="CCDS" id="CCDS50254.1"/>
<dbReference type="RefSeq" id="NP_064296.1">
    <property type="nucleotide sequence ID" value="NM_019912.2"/>
</dbReference>
<dbReference type="BMRB" id="P62838"/>
<dbReference type="SMR" id="P62838"/>
<dbReference type="BioGRID" id="208052">
    <property type="interactions" value="14"/>
</dbReference>
<dbReference type="FunCoup" id="P62838">
    <property type="interactions" value="2974"/>
</dbReference>
<dbReference type="IntAct" id="P62838">
    <property type="interactions" value="1"/>
</dbReference>
<dbReference type="MINT" id="P62838"/>
<dbReference type="STRING" id="10090.ENSMUSP00000132446"/>
<dbReference type="iPTMnet" id="P62838"/>
<dbReference type="PhosphoSitePlus" id="P62838"/>
<dbReference type="SwissPalm" id="P62838"/>
<dbReference type="jPOST" id="P62838"/>
<dbReference type="PaxDb" id="10090-ENSMUSP00000132446"/>
<dbReference type="PeptideAtlas" id="P62838"/>
<dbReference type="ProteomicsDB" id="297770"/>
<dbReference type="Antibodypedia" id="7407">
    <property type="antibodies" value="389 antibodies from 31 providers"/>
</dbReference>
<dbReference type="DNASU" id="56550"/>
<dbReference type="Ensembl" id="ENSMUST00000170693.9">
    <property type="protein sequence ID" value="ENSMUSP00000132446.2"/>
    <property type="gene ID" value="ENSMUSG00000091896.10"/>
</dbReference>
<dbReference type="GeneID" id="56550"/>
<dbReference type="KEGG" id="mmu:56550"/>
<dbReference type="UCSC" id="uc012bbj.1">
    <property type="organism name" value="mouse"/>
</dbReference>
<dbReference type="AGR" id="MGI:1930715"/>
<dbReference type="CTD" id="56550"/>
<dbReference type="MGI" id="MGI:1930715">
    <property type="gene designation" value="Ube2d2a"/>
</dbReference>
<dbReference type="VEuPathDB" id="HostDB:ENSMUSG00000091896"/>
<dbReference type="eggNOG" id="KOG0417">
    <property type="taxonomic scope" value="Eukaryota"/>
</dbReference>
<dbReference type="GeneTree" id="ENSGT00940000153169"/>
<dbReference type="HOGENOM" id="CLU_030988_13_3_1"/>
<dbReference type="InParanoid" id="P62838"/>
<dbReference type="OMA" id="VHFTTRI"/>
<dbReference type="OrthoDB" id="7851174at2759"/>
<dbReference type="PhylomeDB" id="P62838"/>
<dbReference type="TreeFam" id="TF101108"/>
<dbReference type="Reactome" id="R-MMU-1234176">
    <property type="pathway name" value="Oxygen-dependent proline hydroxylation of Hypoxia-inducible Factor Alpha"/>
</dbReference>
<dbReference type="Reactome" id="R-MMU-202424">
    <property type="pathway name" value="Downstream TCR signaling"/>
</dbReference>
<dbReference type="Reactome" id="R-MMU-2871837">
    <property type="pathway name" value="FCERI mediated NF-kB activation"/>
</dbReference>
<dbReference type="Reactome" id="R-MMU-5205685">
    <property type="pathway name" value="PINK1-PRKN Mediated Mitophagy"/>
</dbReference>
<dbReference type="Reactome" id="R-MMU-5357905">
    <property type="pathway name" value="Regulation of TNFR1 signaling"/>
</dbReference>
<dbReference type="Reactome" id="R-MMU-5607764">
    <property type="pathway name" value="CLEC7A (Dectin-1) signaling"/>
</dbReference>
<dbReference type="Reactome" id="R-MMU-8866652">
    <property type="pathway name" value="Synthesis of active ubiquitin: roles of E1 and E2 enzymes"/>
</dbReference>
<dbReference type="Reactome" id="R-MMU-8866654">
    <property type="pathway name" value="E3 ubiquitin ligases ubiquitinate target proteins"/>
</dbReference>
<dbReference type="Reactome" id="R-MMU-8951664">
    <property type="pathway name" value="Neddylation"/>
</dbReference>
<dbReference type="Reactome" id="R-MMU-9033241">
    <property type="pathway name" value="Peroxisomal protein import"/>
</dbReference>
<dbReference type="Reactome" id="R-MMU-937041">
    <property type="pathway name" value="IKK complex recruitment mediated by RIP1"/>
</dbReference>
<dbReference type="Reactome" id="R-MMU-9705462">
    <property type="pathway name" value="Inactivation of CSF3 (G-CSF) signaling"/>
</dbReference>
<dbReference type="Reactome" id="R-MMU-983168">
    <property type="pathway name" value="Antigen processing: Ubiquitination &amp; Proteasome degradation"/>
</dbReference>
<dbReference type="UniPathway" id="UPA00143"/>
<dbReference type="BioGRID-ORCS" id="56550">
    <property type="hits" value="2 hits in 76 CRISPR screens"/>
</dbReference>
<dbReference type="ChiTaRS" id="Ube2d2a">
    <property type="organism name" value="mouse"/>
</dbReference>
<dbReference type="PRO" id="PR:P62838"/>
<dbReference type="Proteomes" id="UP000000589">
    <property type="component" value="Chromosome 18"/>
</dbReference>
<dbReference type="RNAct" id="P62838">
    <property type="molecule type" value="protein"/>
</dbReference>
<dbReference type="Bgee" id="ENSMUSG00000091896">
    <property type="expression patterns" value="Expressed in gonadal ridge and 253 other cell types or tissues"/>
</dbReference>
<dbReference type="ExpressionAtlas" id="P62838">
    <property type="expression patterns" value="baseline and differential"/>
</dbReference>
<dbReference type="GO" id="GO:0032991">
    <property type="term" value="C:protein-containing complex"/>
    <property type="evidence" value="ECO:0000266"/>
    <property type="project" value="MGI"/>
</dbReference>
<dbReference type="GO" id="GO:0005524">
    <property type="term" value="F:ATP binding"/>
    <property type="evidence" value="ECO:0007669"/>
    <property type="project" value="UniProtKB-KW"/>
</dbReference>
<dbReference type="GO" id="GO:0061631">
    <property type="term" value="F:ubiquitin conjugating enzyme activity"/>
    <property type="evidence" value="ECO:0000266"/>
    <property type="project" value="MGI"/>
</dbReference>
<dbReference type="GO" id="GO:0061630">
    <property type="term" value="F:ubiquitin protein ligase activity"/>
    <property type="evidence" value="ECO:0007669"/>
    <property type="project" value="Ensembl"/>
</dbReference>
<dbReference type="GO" id="GO:0004842">
    <property type="term" value="F:ubiquitin-protein transferase activity"/>
    <property type="evidence" value="ECO:0000250"/>
    <property type="project" value="UniProtKB"/>
</dbReference>
<dbReference type="GO" id="GO:0051865">
    <property type="term" value="P:protein autoubiquitination"/>
    <property type="evidence" value="ECO:0007669"/>
    <property type="project" value="Ensembl"/>
</dbReference>
<dbReference type="GO" id="GO:0070936">
    <property type="term" value="P:protein K48-linked ubiquitination"/>
    <property type="evidence" value="ECO:0007669"/>
    <property type="project" value="Ensembl"/>
</dbReference>
<dbReference type="CDD" id="cd23792">
    <property type="entry name" value="UBCc_UBE2D"/>
    <property type="match status" value="1"/>
</dbReference>
<dbReference type="FunFam" id="3.10.110.10:FF:000101">
    <property type="entry name" value="Ubiquitin-conjugating enzyme E2 D2"/>
    <property type="match status" value="1"/>
</dbReference>
<dbReference type="Gene3D" id="3.10.110.10">
    <property type="entry name" value="Ubiquitin Conjugating Enzyme"/>
    <property type="match status" value="1"/>
</dbReference>
<dbReference type="InterPro" id="IPR000608">
    <property type="entry name" value="UBQ-conjugat_E2_core"/>
</dbReference>
<dbReference type="InterPro" id="IPR023313">
    <property type="entry name" value="UBQ-conjugating_AS"/>
</dbReference>
<dbReference type="InterPro" id="IPR016135">
    <property type="entry name" value="UBQ-conjugating_enzyme/RWD"/>
</dbReference>
<dbReference type="PANTHER" id="PTHR24068">
    <property type="entry name" value="UBIQUITIN-CONJUGATING ENZYME E2"/>
    <property type="match status" value="1"/>
</dbReference>
<dbReference type="Pfam" id="PF00179">
    <property type="entry name" value="UQ_con"/>
    <property type="match status" value="1"/>
</dbReference>
<dbReference type="SMART" id="SM00212">
    <property type="entry name" value="UBCc"/>
    <property type="match status" value="1"/>
</dbReference>
<dbReference type="SUPFAM" id="SSF54495">
    <property type="entry name" value="UBC-like"/>
    <property type="match status" value="1"/>
</dbReference>
<dbReference type="PROSITE" id="PS00183">
    <property type="entry name" value="UBC_1"/>
    <property type="match status" value="1"/>
</dbReference>
<dbReference type="PROSITE" id="PS50127">
    <property type="entry name" value="UBC_2"/>
    <property type="match status" value="1"/>
</dbReference>
<evidence type="ECO:0000250" key="1">
    <source>
        <dbReference type="UniProtKB" id="P62837"/>
    </source>
</evidence>
<evidence type="ECO:0000255" key="2">
    <source>
        <dbReference type="PROSITE-ProRule" id="PRU00388"/>
    </source>
</evidence>
<evidence type="ECO:0000255" key="3">
    <source>
        <dbReference type="PROSITE-ProRule" id="PRU10133"/>
    </source>
</evidence>
<evidence type="ECO:0000269" key="4">
    <source>
    </source>
</evidence>
<evidence type="ECO:0000269" key="5">
    <source>
    </source>
</evidence>
<evidence type="ECO:0000269" key="6">
    <source>
    </source>
</evidence>
<keyword id="KW-0067">ATP-binding</keyword>
<keyword id="KW-0547">Nucleotide-binding</keyword>
<keyword id="KW-1185">Reference proteome</keyword>
<keyword id="KW-0808">Transferase</keyword>
<keyword id="KW-0833">Ubl conjugation pathway</keyword>
<reference key="1">
    <citation type="submission" date="1996-08" db="EMBL/GenBank/DDBJ databases">
        <title>Cloning of a murine ubiquitin conjugating enzyme.</title>
        <authorList>
            <person name="Richardson P."/>
            <person name="Zon L.I."/>
        </authorList>
    </citation>
    <scope>NUCLEOTIDE SEQUENCE [MRNA]</scope>
</reference>
<reference key="2">
    <citation type="journal article" date="2004" name="Genome Res.">
        <title>The status, quality, and expansion of the NIH full-length cDNA project: the Mammalian Gene Collection (MGC).</title>
        <authorList>
            <consortium name="The MGC Project Team"/>
        </authorList>
    </citation>
    <scope>NUCLEOTIDE SEQUENCE [LARGE SCALE MRNA]</scope>
    <source>
        <strain>C57BL/6J</strain>
        <tissue>Mammary tumor</tissue>
    </source>
</reference>
<reference key="3">
    <citation type="journal article" date="2002" name="Genomics">
        <title>PJA1, encoding a RING-H2 finger ubiquitin ligase, is a novel human X chromosome gene abundantly expressed in brain.</title>
        <authorList>
            <person name="Yu P."/>
            <person name="Chen Y."/>
            <person name="Tagle D.A."/>
            <person name="Cai T."/>
        </authorList>
    </citation>
    <scope>INTERACTION WITH PJA1</scope>
    <source>
        <strain>129/SvJ</strain>
    </source>
</reference>
<reference key="4">
    <citation type="journal article" date="2007" name="J. Cell Biol.">
        <title>Regulation of synaptic growth and maturation by a synapse-associated E3 ubiquitin ligase at the neuromuscular junction.</title>
        <authorList>
            <person name="Lu Z."/>
            <person name="Je H.S."/>
            <person name="Young P."/>
            <person name="Gross J."/>
            <person name="Lu B."/>
            <person name="Feng G."/>
        </authorList>
    </citation>
    <scope>INTERACTION WITH PDZRN3</scope>
</reference>
<reference key="5">
    <citation type="journal article" date="2016" name="Elife">
        <title>RING finger E3 ligase PPP1R11 regulates TLR2 signaling and innate immunity.</title>
        <authorList>
            <person name="McKelvey A.C."/>
            <person name="Lear T.B."/>
            <person name="Dunn S.R."/>
            <person name="Evankovich J."/>
            <person name="Londino J.D."/>
            <person name="Bednash J.S."/>
            <person name="Zhang Y."/>
            <person name="McVerry B.J."/>
            <person name="Liu Y."/>
            <person name="Chen B.B."/>
        </authorList>
    </citation>
    <scope>INTERACTION WITH PPP1R11</scope>
</reference>
<organism>
    <name type="scientific">Mus musculus</name>
    <name type="common">Mouse</name>
    <dbReference type="NCBI Taxonomy" id="10090"/>
    <lineage>
        <taxon>Eukaryota</taxon>
        <taxon>Metazoa</taxon>
        <taxon>Chordata</taxon>
        <taxon>Craniata</taxon>
        <taxon>Vertebrata</taxon>
        <taxon>Euteleostomi</taxon>
        <taxon>Mammalia</taxon>
        <taxon>Eutheria</taxon>
        <taxon>Euarchontoglires</taxon>
        <taxon>Glires</taxon>
        <taxon>Rodentia</taxon>
        <taxon>Myomorpha</taxon>
        <taxon>Muroidea</taxon>
        <taxon>Muridae</taxon>
        <taxon>Murinae</taxon>
        <taxon>Mus</taxon>
        <taxon>Mus</taxon>
    </lineage>
</organism>
<proteinExistence type="evidence at protein level"/>